<feature type="chain" id="PRO_1000072386" description="Ion-translocating oxidoreductase complex subunit D">
    <location>
        <begin position="1"/>
        <end position="355"/>
    </location>
</feature>
<feature type="transmembrane region" description="Helical" evidence="1">
    <location>
        <begin position="13"/>
        <end position="33"/>
    </location>
</feature>
<feature type="transmembrane region" description="Helical" evidence="1">
    <location>
        <begin position="35"/>
        <end position="55"/>
    </location>
</feature>
<feature type="transmembrane region" description="Helical" evidence="1">
    <location>
        <begin position="77"/>
        <end position="97"/>
    </location>
</feature>
<feature type="transmembrane region" description="Helical" evidence="1">
    <location>
        <begin position="98"/>
        <end position="118"/>
    </location>
</feature>
<feature type="transmembrane region" description="Helical" evidence="1">
    <location>
        <begin position="128"/>
        <end position="148"/>
    </location>
</feature>
<feature type="transmembrane region" description="Helical" evidence="1">
    <location>
        <begin position="216"/>
        <end position="236"/>
    </location>
</feature>
<feature type="transmembrane region" description="Helical" evidence="1">
    <location>
        <begin position="245"/>
        <end position="265"/>
    </location>
</feature>
<feature type="transmembrane region" description="Helical" evidence="1">
    <location>
        <begin position="267"/>
        <end position="287"/>
    </location>
</feature>
<feature type="transmembrane region" description="Helical" evidence="1">
    <location>
        <begin position="294"/>
        <end position="314"/>
    </location>
</feature>
<feature type="transmembrane region" description="Helical" evidence="1">
    <location>
        <begin position="318"/>
        <end position="338"/>
    </location>
</feature>
<feature type="modified residue" description="FMN phosphoryl threonine" evidence="1">
    <location>
        <position position="186"/>
    </location>
</feature>
<proteinExistence type="inferred from homology"/>
<comment type="function">
    <text evidence="1">Part of a membrane-bound complex that couples electron transfer with translocation of ions across the membrane.</text>
</comment>
<comment type="cofactor">
    <cofactor evidence="1">
        <name>FMN</name>
        <dbReference type="ChEBI" id="CHEBI:58210"/>
    </cofactor>
</comment>
<comment type="subunit">
    <text evidence="1">The complex is composed of six subunits: RnfA, RnfB, RnfC, RnfD, RnfE and RnfG.</text>
</comment>
<comment type="subcellular location">
    <subcellularLocation>
        <location evidence="1">Cell inner membrane</location>
        <topology evidence="1">Multi-pass membrane protein</topology>
    </subcellularLocation>
</comment>
<comment type="similarity">
    <text evidence="1">Belongs to the NqrB/RnfD family.</text>
</comment>
<evidence type="ECO:0000255" key="1">
    <source>
        <dbReference type="HAMAP-Rule" id="MF_00462"/>
    </source>
</evidence>
<reference key="1">
    <citation type="journal article" date="2010" name="BMC Genomics">
        <title>A genomic perspective on the potential of Actinobacillus succinogenes for industrial succinate production.</title>
        <authorList>
            <person name="McKinlay J.B."/>
            <person name="Laivenieks M."/>
            <person name="Schindler B.D."/>
            <person name="McKinlay A.A."/>
            <person name="Siddaramappa S."/>
            <person name="Challacombe J.F."/>
            <person name="Lowry S.R."/>
            <person name="Clum A."/>
            <person name="Lapidus A.L."/>
            <person name="Burkhart K.B."/>
            <person name="Harkins V."/>
            <person name="Vieille C."/>
        </authorList>
    </citation>
    <scope>NUCLEOTIDE SEQUENCE [LARGE SCALE GENOMIC DNA]</scope>
    <source>
        <strain>ATCC 55618 / DSM 22257 / CCUG 43843 / 130Z</strain>
    </source>
</reference>
<keyword id="KW-0997">Cell inner membrane</keyword>
<keyword id="KW-1003">Cell membrane</keyword>
<keyword id="KW-0249">Electron transport</keyword>
<keyword id="KW-0285">Flavoprotein</keyword>
<keyword id="KW-0288">FMN</keyword>
<keyword id="KW-0472">Membrane</keyword>
<keyword id="KW-0597">Phosphoprotein</keyword>
<keyword id="KW-1185">Reference proteome</keyword>
<keyword id="KW-1278">Translocase</keyword>
<keyword id="KW-0812">Transmembrane</keyword>
<keyword id="KW-1133">Transmembrane helix</keyword>
<keyword id="KW-0813">Transport</keyword>
<dbReference type="EC" id="7.-.-.-" evidence="1"/>
<dbReference type="EMBL" id="CP000746">
    <property type="protein sequence ID" value="ABR75090.1"/>
    <property type="molecule type" value="Genomic_DNA"/>
</dbReference>
<dbReference type="RefSeq" id="WP_012073467.1">
    <property type="nucleotide sequence ID" value="NC_009655.1"/>
</dbReference>
<dbReference type="SMR" id="A6VQ43"/>
<dbReference type="STRING" id="339671.Asuc_1738"/>
<dbReference type="KEGG" id="asu:Asuc_1738"/>
<dbReference type="eggNOG" id="COG4658">
    <property type="taxonomic scope" value="Bacteria"/>
</dbReference>
<dbReference type="HOGENOM" id="CLU_042020_0_0_6"/>
<dbReference type="OrthoDB" id="9776359at2"/>
<dbReference type="Proteomes" id="UP000001114">
    <property type="component" value="Chromosome"/>
</dbReference>
<dbReference type="GO" id="GO:0005886">
    <property type="term" value="C:plasma membrane"/>
    <property type="evidence" value="ECO:0007669"/>
    <property type="project" value="UniProtKB-SubCell"/>
</dbReference>
<dbReference type="GO" id="GO:0022900">
    <property type="term" value="P:electron transport chain"/>
    <property type="evidence" value="ECO:0007669"/>
    <property type="project" value="UniProtKB-UniRule"/>
</dbReference>
<dbReference type="GO" id="GO:0055085">
    <property type="term" value="P:transmembrane transport"/>
    <property type="evidence" value="ECO:0007669"/>
    <property type="project" value="InterPro"/>
</dbReference>
<dbReference type="HAMAP" id="MF_00462">
    <property type="entry name" value="RsxD_RnfD"/>
    <property type="match status" value="1"/>
</dbReference>
<dbReference type="InterPro" id="IPR004338">
    <property type="entry name" value="NqrB/RnfD"/>
</dbReference>
<dbReference type="InterPro" id="IPR011303">
    <property type="entry name" value="RnfD_bac"/>
</dbReference>
<dbReference type="NCBIfam" id="NF002011">
    <property type="entry name" value="PRK00816.1"/>
    <property type="match status" value="1"/>
</dbReference>
<dbReference type="NCBIfam" id="TIGR01946">
    <property type="entry name" value="rnfD"/>
    <property type="match status" value="1"/>
</dbReference>
<dbReference type="PANTHER" id="PTHR30578">
    <property type="entry name" value="ELECTRON TRANSPORT COMPLEX PROTEIN RNFD"/>
    <property type="match status" value="1"/>
</dbReference>
<dbReference type="PANTHER" id="PTHR30578:SF0">
    <property type="entry name" value="ION-TRANSLOCATING OXIDOREDUCTASE COMPLEX SUBUNIT D"/>
    <property type="match status" value="1"/>
</dbReference>
<dbReference type="Pfam" id="PF03116">
    <property type="entry name" value="NQR2_RnfD_RnfE"/>
    <property type="match status" value="1"/>
</dbReference>
<gene>
    <name evidence="1" type="primary">rnfD</name>
    <name type="ordered locus">Asuc_1738</name>
</gene>
<accession>A6VQ43</accession>
<protein>
    <recommendedName>
        <fullName evidence="1">Ion-translocating oxidoreductase complex subunit D</fullName>
        <ecNumber evidence="1">7.-.-.-</ecNumber>
    </recommendedName>
    <alternativeName>
        <fullName evidence="1">Rnf electron transport complex subunit D</fullName>
    </alternativeName>
</protein>
<name>RNFD_ACTSZ</name>
<organism>
    <name type="scientific">Actinobacillus succinogenes (strain ATCC 55618 / DSM 22257 / CCUG 43843 / 130Z)</name>
    <dbReference type="NCBI Taxonomy" id="339671"/>
    <lineage>
        <taxon>Bacteria</taxon>
        <taxon>Pseudomonadati</taxon>
        <taxon>Pseudomonadota</taxon>
        <taxon>Gammaproteobacteria</taxon>
        <taxon>Pasteurellales</taxon>
        <taxon>Pasteurellaceae</taxon>
        <taxon>Actinobacillus</taxon>
    </lineage>
</organism>
<sequence>MFKLTSSPHIHSGKLTARIMLWVIFGMLPALAVQVYYFGFGVLIQICLAVALALILEFAVTKLRKKPSLFYISDFSVILTALILAMAIPPYAPYWVILIGTFCAVILGKHVYGGLGQNLFNPAMVGYVVLLISFPVQMTGWMPPISLLHEPPTFGDSLGLIFSGVTGDGFSLSQLVSSIDGLSSATPLDSAKTWLKSGGSATDLLNQPIFLPGLEAGLGWLQVNLAFFIGGLFLIWKKAIHWQTPVAILLSLGIFCGLFDLFGNAQAVGFFAQLFSGAMMFGAFFIATDPVTAPVTPKGKWVFGILIGLLICLIRQFGNYPDGVAFAVLLANICVPLIDQYTRPRVAGYGLNGRN</sequence>